<organism>
    <name type="scientific">Elizabethkingia meningoseptica</name>
    <name type="common">Chryseobacterium meningosepticum</name>
    <dbReference type="NCBI Taxonomy" id="238"/>
    <lineage>
        <taxon>Bacteria</taxon>
        <taxon>Pseudomonadati</taxon>
        <taxon>Bacteroidota</taxon>
        <taxon>Flavobacteriia</taxon>
        <taxon>Flavobacteriales</taxon>
        <taxon>Weeksellaceae</taxon>
        <taxon>Elizabethkingia</taxon>
    </lineage>
</organism>
<feature type="signal peptide" evidence="1 2">
    <location>
        <begin position="1"/>
        <end position="21"/>
    </location>
</feature>
<feature type="chain" id="PRO_0000016956" description="Metallo-beta-lactamase type 2">
    <location>
        <begin position="22"/>
        <end position="248"/>
    </location>
</feature>
<feature type="binding site" evidence="1">
    <location>
        <position position="97"/>
    </location>
    <ligand>
        <name>Zn(2+)</name>
        <dbReference type="ChEBI" id="CHEBI:29105"/>
        <label>1</label>
    </ligand>
</feature>
<feature type="binding site" evidence="1">
    <location>
        <position position="99"/>
    </location>
    <ligand>
        <name>Zn(2+)</name>
        <dbReference type="ChEBI" id="CHEBI:29105"/>
        <label>1</label>
    </ligand>
</feature>
<feature type="binding site" evidence="1">
    <location>
        <position position="101"/>
    </location>
    <ligand>
        <name>Zn(2+)</name>
        <dbReference type="ChEBI" id="CHEBI:29105"/>
        <label>2</label>
    </ligand>
</feature>
<feature type="binding site" evidence="1">
    <location>
        <position position="160"/>
    </location>
    <ligand>
        <name>Zn(2+)</name>
        <dbReference type="ChEBI" id="CHEBI:29105"/>
        <label>1</label>
    </ligand>
</feature>
<feature type="binding site" evidence="1">
    <location>
        <position position="179"/>
    </location>
    <ligand>
        <name>Zn(2+)</name>
        <dbReference type="ChEBI" id="CHEBI:29105"/>
        <label>2</label>
    </ligand>
</feature>
<feature type="binding site" evidence="1">
    <location>
        <position position="182"/>
    </location>
    <ligand>
        <name>substrate</name>
    </ligand>
</feature>
<feature type="binding site" evidence="1">
    <location>
        <position position="221"/>
    </location>
    <ligand>
        <name>Zn(2+)</name>
        <dbReference type="ChEBI" id="CHEBI:29105"/>
        <label>2</label>
    </ligand>
</feature>
<reference key="1">
    <citation type="journal article" date="2000" name="Antimicrob. Agents Chemother.">
        <title>Molecular and biochemical heterogeneity of class B carbapenem-hydrolyzing beta-lactamases in Chryseobacterium meningosepticum.</title>
        <authorList>
            <person name="Bellais S."/>
            <person name="Aubert D."/>
            <person name="Naas T."/>
            <person name="Nordmann P."/>
        </authorList>
    </citation>
    <scope>NUCLEOTIDE SEQUENCE [GENOMIC DNA]</scope>
    <source>
        <strain>HO1J100</strain>
    </source>
</reference>
<name>BLAB8_ELIME</name>
<proteinExistence type="inferred from homology"/>
<gene>
    <name type="primary">blaB8</name>
    <name evidence="1" type="synonym">blaB</name>
</gene>
<evidence type="ECO:0000250" key="1">
    <source>
        <dbReference type="UniProtKB" id="O08498"/>
    </source>
</evidence>
<evidence type="ECO:0000255" key="2"/>
<evidence type="ECO:0000305" key="3"/>
<keyword id="KW-0046">Antibiotic resistance</keyword>
<keyword id="KW-0378">Hydrolase</keyword>
<keyword id="KW-0479">Metal-binding</keyword>
<keyword id="KW-0574">Periplasm</keyword>
<keyword id="KW-0732">Signal</keyword>
<keyword id="KW-0862">Zinc</keyword>
<protein>
    <recommendedName>
        <fullName evidence="3">Metallo-beta-lactamase type 2</fullName>
        <ecNumber evidence="1">3.5.2.6</ecNumber>
    </recommendedName>
    <alternativeName>
        <fullName evidence="1">B2 metallo-beta-lactamase</fullName>
    </alternativeName>
    <alternativeName>
        <fullName evidence="1">Beta-lactamase type II</fullName>
    </alternativeName>
    <alternativeName>
        <fullName evidence="1">Carbapenem-hydrolyzing beta-lactamase BlaB-8</fullName>
        <shortName evidence="1">CHbetaL-8</shortName>
    </alternativeName>
    <alternativeName>
        <fullName evidence="1">Class B carbapenemase BlaB-8</fullName>
    </alternativeName>
    <alternativeName>
        <fullName evidence="1">Metallo-beta-lactamase type II</fullName>
    </alternativeName>
</protein>
<dbReference type="EC" id="3.5.2.6" evidence="1"/>
<dbReference type="EMBL" id="AF189305">
    <property type="protein sequence ID" value="AAF89161.1"/>
    <property type="molecule type" value="Genomic_DNA"/>
</dbReference>
<dbReference type="SMR" id="Q9KJA7"/>
<dbReference type="CARD" id="ARO:3005556">
    <property type="molecule name" value="BlaB-8"/>
    <property type="mechanism identifier" value="ARO:0001004"/>
    <property type="mechanism name" value="antibiotic inactivation"/>
</dbReference>
<dbReference type="KEGG" id="ag:AAF89161"/>
<dbReference type="GO" id="GO:0042597">
    <property type="term" value="C:periplasmic space"/>
    <property type="evidence" value="ECO:0007669"/>
    <property type="project" value="UniProtKB-SubCell"/>
</dbReference>
<dbReference type="GO" id="GO:0008800">
    <property type="term" value="F:beta-lactamase activity"/>
    <property type="evidence" value="ECO:0007669"/>
    <property type="project" value="UniProtKB-EC"/>
</dbReference>
<dbReference type="GO" id="GO:0008270">
    <property type="term" value="F:zinc ion binding"/>
    <property type="evidence" value="ECO:0007669"/>
    <property type="project" value="InterPro"/>
</dbReference>
<dbReference type="GO" id="GO:0017001">
    <property type="term" value="P:antibiotic catabolic process"/>
    <property type="evidence" value="ECO:0007669"/>
    <property type="project" value="InterPro"/>
</dbReference>
<dbReference type="GO" id="GO:0046677">
    <property type="term" value="P:response to antibiotic"/>
    <property type="evidence" value="ECO:0007669"/>
    <property type="project" value="UniProtKB-KW"/>
</dbReference>
<dbReference type="CDD" id="cd16316">
    <property type="entry name" value="BlaB-like_MBL-B1"/>
    <property type="match status" value="1"/>
</dbReference>
<dbReference type="FunFam" id="3.60.15.10:FF:000096">
    <property type="entry name" value="Metallo-beta-lactamase type 2"/>
    <property type="match status" value="1"/>
</dbReference>
<dbReference type="Gene3D" id="3.60.15.10">
    <property type="entry name" value="Ribonuclease Z/Hydroxyacylglutathione hydrolase-like"/>
    <property type="match status" value="1"/>
</dbReference>
<dbReference type="InterPro" id="IPR001018">
    <property type="entry name" value="Beta-lactamase_class-B_CS"/>
</dbReference>
<dbReference type="InterPro" id="IPR001279">
    <property type="entry name" value="Metallo-B-lactamas"/>
</dbReference>
<dbReference type="InterPro" id="IPR050855">
    <property type="entry name" value="NDM-1-like"/>
</dbReference>
<dbReference type="InterPro" id="IPR036866">
    <property type="entry name" value="RibonucZ/Hydroxyglut_hydro"/>
</dbReference>
<dbReference type="NCBIfam" id="NF012229">
    <property type="entry name" value="bla_class_B_core"/>
    <property type="match status" value="1"/>
</dbReference>
<dbReference type="NCBIfam" id="NF033088">
    <property type="entry name" value="bla_subclass_B1"/>
    <property type="match status" value="1"/>
</dbReference>
<dbReference type="NCBIfam" id="NF033107">
    <property type="entry name" value="blaB"/>
    <property type="match status" value="1"/>
</dbReference>
<dbReference type="NCBIfam" id="NF012146">
    <property type="entry name" value="blaB-IND-MUS"/>
    <property type="match status" value="1"/>
</dbReference>
<dbReference type="PANTHER" id="PTHR42951:SF4">
    <property type="entry name" value="ACYL-COENZYME A THIOESTERASE MBLAC2"/>
    <property type="match status" value="1"/>
</dbReference>
<dbReference type="PANTHER" id="PTHR42951">
    <property type="entry name" value="METALLO-BETA-LACTAMASE DOMAIN-CONTAINING"/>
    <property type="match status" value="1"/>
</dbReference>
<dbReference type="Pfam" id="PF00753">
    <property type="entry name" value="Lactamase_B"/>
    <property type="match status" value="1"/>
</dbReference>
<dbReference type="SMART" id="SM00849">
    <property type="entry name" value="Lactamase_B"/>
    <property type="match status" value="1"/>
</dbReference>
<dbReference type="SUPFAM" id="SSF56281">
    <property type="entry name" value="Metallo-hydrolase/oxidoreductase"/>
    <property type="match status" value="1"/>
</dbReference>
<dbReference type="PROSITE" id="PS00743">
    <property type="entry name" value="BETA_LACTAMASE_B_1"/>
    <property type="match status" value="1"/>
</dbReference>
<dbReference type="PROSITE" id="PS00744">
    <property type="entry name" value="BETA_LACTAMASE_B_2"/>
    <property type="match status" value="1"/>
</dbReference>
<sequence>MKGLKGLLVLALGFTGLQVFGQQNPDIKIEKLKDNLYVYTTYNTFKGTKYAANAVYMVTDKGVVVIDSPWGEDKFKSFTDEIYKKHGKKVIMNIATHSHDDRAGGLEYFGKLGAKTYSTKMTDSILAKENKPRAKYTFDNNKSFKVGKTEFQVYYPGKGHTADNVVVWFPKDKVLVGGCIVKSGDSKDLGFIGEAYVNDWTQSIHNIQQKFPDVQYVVAGHDDWKDQTSIQHTLDLISEYQQKQKASN</sequence>
<comment type="function">
    <text evidence="1">Confers resistance to the different beta-lactams antibiotics (penicillin, cephalosporin and carbapenem) via the hydrolysis of the beta-lactam ring.</text>
</comment>
<comment type="catalytic activity">
    <reaction evidence="1">
        <text>a beta-lactam + H2O = a substituted beta-amino acid</text>
        <dbReference type="Rhea" id="RHEA:20401"/>
        <dbReference type="ChEBI" id="CHEBI:15377"/>
        <dbReference type="ChEBI" id="CHEBI:35627"/>
        <dbReference type="ChEBI" id="CHEBI:140347"/>
        <dbReference type="EC" id="3.5.2.6"/>
    </reaction>
</comment>
<comment type="cofactor">
    <cofactor evidence="1">
        <name>Zn(2+)</name>
        <dbReference type="ChEBI" id="CHEBI:29105"/>
    </cofactor>
    <text evidence="1">Binds 2 Zn(2+) ions per subunit.</text>
</comment>
<comment type="subunit">
    <text evidence="1">Monomer.</text>
</comment>
<comment type="subcellular location">
    <subcellularLocation>
        <location evidence="3">Periplasm</location>
    </subcellularLocation>
</comment>
<comment type="similarity">
    <text evidence="3">Belongs to the metallo-beta-lactamase superfamily. Class-B beta-lactamase family.</text>
</comment>
<accession>Q9KJA7</accession>